<name>DNLJ_XANP2</name>
<keyword id="KW-0227">DNA damage</keyword>
<keyword id="KW-0234">DNA repair</keyword>
<keyword id="KW-0235">DNA replication</keyword>
<keyword id="KW-0436">Ligase</keyword>
<keyword id="KW-0460">Magnesium</keyword>
<keyword id="KW-0464">Manganese</keyword>
<keyword id="KW-0479">Metal-binding</keyword>
<keyword id="KW-0520">NAD</keyword>
<keyword id="KW-1185">Reference proteome</keyword>
<keyword id="KW-0862">Zinc</keyword>
<evidence type="ECO:0000255" key="1">
    <source>
        <dbReference type="HAMAP-Rule" id="MF_01588"/>
    </source>
</evidence>
<dbReference type="EC" id="6.5.1.2" evidence="1"/>
<dbReference type="EMBL" id="CP000781">
    <property type="protein sequence ID" value="ABS67007.1"/>
    <property type="molecule type" value="Genomic_DNA"/>
</dbReference>
<dbReference type="SMR" id="A7IG64"/>
<dbReference type="STRING" id="78245.Xaut_1762"/>
<dbReference type="KEGG" id="xau:Xaut_1762"/>
<dbReference type="eggNOG" id="COG0272">
    <property type="taxonomic scope" value="Bacteria"/>
</dbReference>
<dbReference type="HOGENOM" id="CLU_007764_2_0_5"/>
<dbReference type="OrthoDB" id="9759736at2"/>
<dbReference type="PhylomeDB" id="A7IG64"/>
<dbReference type="Proteomes" id="UP000002417">
    <property type="component" value="Chromosome"/>
</dbReference>
<dbReference type="GO" id="GO:0005829">
    <property type="term" value="C:cytosol"/>
    <property type="evidence" value="ECO:0007669"/>
    <property type="project" value="TreeGrafter"/>
</dbReference>
<dbReference type="GO" id="GO:0003911">
    <property type="term" value="F:DNA ligase (NAD+) activity"/>
    <property type="evidence" value="ECO:0007669"/>
    <property type="project" value="UniProtKB-UniRule"/>
</dbReference>
<dbReference type="GO" id="GO:0046872">
    <property type="term" value="F:metal ion binding"/>
    <property type="evidence" value="ECO:0007669"/>
    <property type="project" value="UniProtKB-KW"/>
</dbReference>
<dbReference type="GO" id="GO:0006281">
    <property type="term" value="P:DNA repair"/>
    <property type="evidence" value="ECO:0007669"/>
    <property type="project" value="UniProtKB-KW"/>
</dbReference>
<dbReference type="GO" id="GO:0006260">
    <property type="term" value="P:DNA replication"/>
    <property type="evidence" value="ECO:0007669"/>
    <property type="project" value="UniProtKB-KW"/>
</dbReference>
<dbReference type="CDD" id="cd17748">
    <property type="entry name" value="BRCT_DNA_ligase_like"/>
    <property type="match status" value="1"/>
</dbReference>
<dbReference type="CDD" id="cd00114">
    <property type="entry name" value="LIGANc"/>
    <property type="match status" value="1"/>
</dbReference>
<dbReference type="FunFam" id="1.10.150.20:FF:000007">
    <property type="entry name" value="DNA ligase"/>
    <property type="match status" value="1"/>
</dbReference>
<dbReference type="FunFam" id="2.40.50.140:FF:000012">
    <property type="entry name" value="DNA ligase"/>
    <property type="match status" value="1"/>
</dbReference>
<dbReference type="FunFam" id="3.30.470.30:FF:000001">
    <property type="entry name" value="DNA ligase"/>
    <property type="match status" value="1"/>
</dbReference>
<dbReference type="Gene3D" id="6.20.10.30">
    <property type="match status" value="1"/>
</dbReference>
<dbReference type="Gene3D" id="1.10.150.20">
    <property type="entry name" value="5' to 3' exonuclease, C-terminal subdomain"/>
    <property type="match status" value="2"/>
</dbReference>
<dbReference type="Gene3D" id="3.40.50.10190">
    <property type="entry name" value="BRCT domain"/>
    <property type="match status" value="1"/>
</dbReference>
<dbReference type="Gene3D" id="3.30.470.30">
    <property type="entry name" value="DNA ligase/mRNA capping enzyme"/>
    <property type="match status" value="1"/>
</dbReference>
<dbReference type="Gene3D" id="1.10.287.610">
    <property type="entry name" value="Helix hairpin bin"/>
    <property type="match status" value="1"/>
</dbReference>
<dbReference type="Gene3D" id="2.40.50.140">
    <property type="entry name" value="Nucleic acid-binding proteins"/>
    <property type="match status" value="1"/>
</dbReference>
<dbReference type="HAMAP" id="MF_01588">
    <property type="entry name" value="DNA_ligase_A"/>
    <property type="match status" value="1"/>
</dbReference>
<dbReference type="InterPro" id="IPR001357">
    <property type="entry name" value="BRCT_dom"/>
</dbReference>
<dbReference type="InterPro" id="IPR036420">
    <property type="entry name" value="BRCT_dom_sf"/>
</dbReference>
<dbReference type="InterPro" id="IPR041663">
    <property type="entry name" value="DisA/LigA_HHH"/>
</dbReference>
<dbReference type="InterPro" id="IPR001679">
    <property type="entry name" value="DNA_ligase"/>
</dbReference>
<dbReference type="InterPro" id="IPR018239">
    <property type="entry name" value="DNA_ligase_AS"/>
</dbReference>
<dbReference type="InterPro" id="IPR033136">
    <property type="entry name" value="DNA_ligase_CS"/>
</dbReference>
<dbReference type="InterPro" id="IPR013839">
    <property type="entry name" value="DNAligase_adenylation"/>
</dbReference>
<dbReference type="InterPro" id="IPR013840">
    <property type="entry name" value="DNAligase_N"/>
</dbReference>
<dbReference type="InterPro" id="IPR012340">
    <property type="entry name" value="NA-bd_OB-fold"/>
</dbReference>
<dbReference type="InterPro" id="IPR004150">
    <property type="entry name" value="NAD_DNA_ligase_OB"/>
</dbReference>
<dbReference type="InterPro" id="IPR010994">
    <property type="entry name" value="RuvA_2-like"/>
</dbReference>
<dbReference type="InterPro" id="IPR004149">
    <property type="entry name" value="Znf_DNAligase_C4"/>
</dbReference>
<dbReference type="NCBIfam" id="TIGR00575">
    <property type="entry name" value="dnlj"/>
    <property type="match status" value="1"/>
</dbReference>
<dbReference type="NCBIfam" id="NF005932">
    <property type="entry name" value="PRK07956.1"/>
    <property type="match status" value="1"/>
</dbReference>
<dbReference type="PANTHER" id="PTHR23389">
    <property type="entry name" value="CHROMOSOME TRANSMISSION FIDELITY FACTOR 18"/>
    <property type="match status" value="1"/>
</dbReference>
<dbReference type="PANTHER" id="PTHR23389:SF9">
    <property type="entry name" value="DNA LIGASE"/>
    <property type="match status" value="1"/>
</dbReference>
<dbReference type="Pfam" id="PF00533">
    <property type="entry name" value="BRCT"/>
    <property type="match status" value="1"/>
</dbReference>
<dbReference type="Pfam" id="PF01653">
    <property type="entry name" value="DNA_ligase_aden"/>
    <property type="match status" value="1"/>
</dbReference>
<dbReference type="Pfam" id="PF03120">
    <property type="entry name" value="DNA_ligase_OB"/>
    <property type="match status" value="1"/>
</dbReference>
<dbReference type="Pfam" id="PF03119">
    <property type="entry name" value="DNA_ligase_ZBD"/>
    <property type="match status" value="1"/>
</dbReference>
<dbReference type="Pfam" id="PF12826">
    <property type="entry name" value="HHH_2"/>
    <property type="match status" value="1"/>
</dbReference>
<dbReference type="PIRSF" id="PIRSF001604">
    <property type="entry name" value="LigA"/>
    <property type="match status" value="1"/>
</dbReference>
<dbReference type="SMART" id="SM00292">
    <property type="entry name" value="BRCT"/>
    <property type="match status" value="1"/>
</dbReference>
<dbReference type="SMART" id="SM00532">
    <property type="entry name" value="LIGANc"/>
    <property type="match status" value="1"/>
</dbReference>
<dbReference type="SUPFAM" id="SSF52113">
    <property type="entry name" value="BRCT domain"/>
    <property type="match status" value="1"/>
</dbReference>
<dbReference type="SUPFAM" id="SSF56091">
    <property type="entry name" value="DNA ligase/mRNA capping enzyme, catalytic domain"/>
    <property type="match status" value="1"/>
</dbReference>
<dbReference type="SUPFAM" id="SSF50249">
    <property type="entry name" value="Nucleic acid-binding proteins"/>
    <property type="match status" value="1"/>
</dbReference>
<dbReference type="SUPFAM" id="SSF47781">
    <property type="entry name" value="RuvA domain 2-like"/>
    <property type="match status" value="1"/>
</dbReference>
<dbReference type="PROSITE" id="PS50172">
    <property type="entry name" value="BRCT"/>
    <property type="match status" value="1"/>
</dbReference>
<dbReference type="PROSITE" id="PS01055">
    <property type="entry name" value="DNA_LIGASE_N1"/>
    <property type="match status" value="1"/>
</dbReference>
<dbReference type="PROSITE" id="PS01056">
    <property type="entry name" value="DNA_LIGASE_N2"/>
    <property type="match status" value="1"/>
</dbReference>
<gene>
    <name evidence="1" type="primary">ligA</name>
    <name type="ordered locus">Xaut_1762</name>
</gene>
<accession>A7IG64</accession>
<sequence length="720" mass="77769">MTAPKSTAPASTAATFRAIPVDDLSPAEAASEHKALAQEITGHDAAYYREDAPVVSDAEYDALRHRYEAIEERFPGLRGEDSLSEKVGAAPSEKFGKVAHKVPMLSLANCFSDEEVVEFVARVKRFLNLGPDDEVAFTCEPKIDGLSCSLHYENGRLTVAATRGDGSQGEDVTQNVRTIADIPERLAGKGVPQTIDVRGEVYMAKADFEALNARQAAAEEKVFANPRNAAAGSLRQLDSSITASRPLKFFAYAWGEASDLPAETQFGVVEAFARWGFTTNPLMVVAKDAAGLIAHYRSIEAQRALLGYDIDGVVYKVNSLELQRRLGFVSRSPRWAIAHKFPAEQATTVLEDIEIQVGRTGALTPVAKLTPVTVGGVVVSSATLHNEDEIARKDVRIGDTVVVQRAGDVIPQVVRVIEEKRPAGSKPYEFPTHCPACGSHAVREVDTKSGKVDAVRRCTGGLICPAQMVERLRHFVSRNAFDIEGLGEKQVRAFYEWGLIASPADIFTLETRNARSLQRLENRDGWGKTSAANLFAAIAERRTVAVDRFVFALGIRHVGETNAKRLMRHYGTVEALEAGALAAVIPGEEHPKGNEAWQEMIGIDGIGDVVAEAVIEFFGEPRNREVVTALLKEVTPEPMEQVAAASPVSGKTVVFTGSLEKMTRDEAKAMAERLGAKVAGSVSAKTNLVVAGPGAGSKLEKAQALGVQVITEDEWFELVG</sequence>
<proteinExistence type="inferred from homology"/>
<feature type="chain" id="PRO_0000380510" description="DNA ligase">
    <location>
        <begin position="1"/>
        <end position="720"/>
    </location>
</feature>
<feature type="domain" description="BRCT" evidence="1">
    <location>
        <begin position="643"/>
        <end position="720"/>
    </location>
</feature>
<feature type="active site" description="N6-AMP-lysine intermediate" evidence="1">
    <location>
        <position position="142"/>
    </location>
</feature>
<feature type="binding site" evidence="1">
    <location>
        <begin position="57"/>
        <end position="61"/>
    </location>
    <ligand>
        <name>NAD(+)</name>
        <dbReference type="ChEBI" id="CHEBI:57540"/>
    </ligand>
</feature>
<feature type="binding site" evidence="1">
    <location>
        <begin position="106"/>
        <end position="107"/>
    </location>
    <ligand>
        <name>NAD(+)</name>
        <dbReference type="ChEBI" id="CHEBI:57540"/>
    </ligand>
</feature>
<feature type="binding site" evidence="1">
    <location>
        <position position="140"/>
    </location>
    <ligand>
        <name>NAD(+)</name>
        <dbReference type="ChEBI" id="CHEBI:57540"/>
    </ligand>
</feature>
<feature type="binding site" evidence="1">
    <location>
        <position position="163"/>
    </location>
    <ligand>
        <name>NAD(+)</name>
        <dbReference type="ChEBI" id="CHEBI:57540"/>
    </ligand>
</feature>
<feature type="binding site" evidence="1">
    <location>
        <position position="200"/>
    </location>
    <ligand>
        <name>NAD(+)</name>
        <dbReference type="ChEBI" id="CHEBI:57540"/>
    </ligand>
</feature>
<feature type="binding site" evidence="1">
    <location>
        <position position="316"/>
    </location>
    <ligand>
        <name>NAD(+)</name>
        <dbReference type="ChEBI" id="CHEBI:57540"/>
    </ligand>
</feature>
<feature type="binding site" evidence="1">
    <location>
        <position position="340"/>
    </location>
    <ligand>
        <name>NAD(+)</name>
        <dbReference type="ChEBI" id="CHEBI:57540"/>
    </ligand>
</feature>
<feature type="binding site" evidence="1">
    <location>
        <position position="434"/>
    </location>
    <ligand>
        <name>Zn(2+)</name>
        <dbReference type="ChEBI" id="CHEBI:29105"/>
    </ligand>
</feature>
<feature type="binding site" evidence="1">
    <location>
        <position position="437"/>
    </location>
    <ligand>
        <name>Zn(2+)</name>
        <dbReference type="ChEBI" id="CHEBI:29105"/>
    </ligand>
</feature>
<feature type="binding site" evidence="1">
    <location>
        <position position="458"/>
    </location>
    <ligand>
        <name>Zn(2+)</name>
        <dbReference type="ChEBI" id="CHEBI:29105"/>
    </ligand>
</feature>
<feature type="binding site" evidence="1">
    <location>
        <position position="464"/>
    </location>
    <ligand>
        <name>Zn(2+)</name>
        <dbReference type="ChEBI" id="CHEBI:29105"/>
    </ligand>
</feature>
<protein>
    <recommendedName>
        <fullName evidence="1">DNA ligase</fullName>
        <ecNumber evidence="1">6.5.1.2</ecNumber>
    </recommendedName>
    <alternativeName>
        <fullName evidence="1">Polydeoxyribonucleotide synthase [NAD(+)]</fullName>
    </alternativeName>
</protein>
<comment type="function">
    <text evidence="1">DNA ligase that catalyzes the formation of phosphodiester linkages between 5'-phosphoryl and 3'-hydroxyl groups in double-stranded DNA using NAD as a coenzyme and as the energy source for the reaction. It is essential for DNA replication and repair of damaged DNA.</text>
</comment>
<comment type="catalytic activity">
    <reaction evidence="1">
        <text>NAD(+) + (deoxyribonucleotide)n-3'-hydroxyl + 5'-phospho-(deoxyribonucleotide)m = (deoxyribonucleotide)n+m + AMP + beta-nicotinamide D-nucleotide.</text>
        <dbReference type="EC" id="6.5.1.2"/>
    </reaction>
</comment>
<comment type="cofactor">
    <cofactor evidence="1">
        <name>Mg(2+)</name>
        <dbReference type="ChEBI" id="CHEBI:18420"/>
    </cofactor>
    <cofactor evidence="1">
        <name>Mn(2+)</name>
        <dbReference type="ChEBI" id="CHEBI:29035"/>
    </cofactor>
</comment>
<comment type="similarity">
    <text evidence="1">Belongs to the NAD-dependent DNA ligase family. LigA subfamily.</text>
</comment>
<organism>
    <name type="scientific">Xanthobacter autotrophicus (strain ATCC BAA-1158 / Py2)</name>
    <dbReference type="NCBI Taxonomy" id="78245"/>
    <lineage>
        <taxon>Bacteria</taxon>
        <taxon>Pseudomonadati</taxon>
        <taxon>Pseudomonadota</taxon>
        <taxon>Alphaproteobacteria</taxon>
        <taxon>Hyphomicrobiales</taxon>
        <taxon>Xanthobacteraceae</taxon>
        <taxon>Xanthobacter</taxon>
    </lineage>
</organism>
<reference key="1">
    <citation type="submission" date="2007-07" db="EMBL/GenBank/DDBJ databases">
        <title>Complete sequence of chromosome of Xanthobacter autotrophicus Py2.</title>
        <authorList>
            <consortium name="US DOE Joint Genome Institute"/>
            <person name="Copeland A."/>
            <person name="Lucas S."/>
            <person name="Lapidus A."/>
            <person name="Barry K."/>
            <person name="Glavina del Rio T."/>
            <person name="Hammon N."/>
            <person name="Israni S."/>
            <person name="Dalin E."/>
            <person name="Tice H."/>
            <person name="Pitluck S."/>
            <person name="Sims D."/>
            <person name="Brettin T."/>
            <person name="Bruce D."/>
            <person name="Detter J.C."/>
            <person name="Han C."/>
            <person name="Tapia R."/>
            <person name="Brainard J."/>
            <person name="Schmutz J."/>
            <person name="Larimer F."/>
            <person name="Land M."/>
            <person name="Hauser L."/>
            <person name="Kyrpides N."/>
            <person name="Kim E."/>
            <person name="Ensigns S.A."/>
            <person name="Richardson P."/>
        </authorList>
    </citation>
    <scope>NUCLEOTIDE SEQUENCE [LARGE SCALE GENOMIC DNA]</scope>
    <source>
        <strain>ATCC BAA-1158 / Py2</strain>
    </source>
</reference>